<proteinExistence type="evidence at protein level"/>
<keyword id="KW-0067">ATP-binding</keyword>
<keyword id="KW-0131">Cell cycle</keyword>
<keyword id="KW-0132">Cell division</keyword>
<keyword id="KW-0418">Kinase</keyword>
<keyword id="KW-0498">Mitosis</keyword>
<keyword id="KW-0547">Nucleotide-binding</keyword>
<keyword id="KW-0597">Phosphoprotein</keyword>
<keyword id="KW-1185">Reference proteome</keyword>
<keyword id="KW-0723">Serine/threonine-protein kinase</keyword>
<keyword id="KW-0808">Transferase</keyword>
<gene>
    <name evidence="7" type="primary">Cdk2</name>
    <name evidence="7" type="synonym">cdc2c</name>
    <name evidence="7" type="ORF">CG10498</name>
</gene>
<evidence type="ECO:0000250" key="1"/>
<evidence type="ECO:0000255" key="2">
    <source>
        <dbReference type="PROSITE-ProRule" id="PRU00159"/>
    </source>
</evidence>
<evidence type="ECO:0000255" key="3">
    <source>
        <dbReference type="PROSITE-ProRule" id="PRU10027"/>
    </source>
</evidence>
<evidence type="ECO:0000269" key="4">
    <source>
    </source>
</evidence>
<evidence type="ECO:0000269" key="5">
    <source>
    </source>
</evidence>
<evidence type="ECO:0000305" key="6"/>
<evidence type="ECO:0000312" key="7">
    <source>
        <dbReference type="FlyBase" id="FBgn0004107"/>
    </source>
</evidence>
<name>CDK2_DROME</name>
<dbReference type="EC" id="2.7.11.22"/>
<dbReference type="EC" id="2.7.11.23"/>
<dbReference type="EMBL" id="X57486">
    <property type="protein sequence ID" value="CAA40724.1"/>
    <property type="molecule type" value="mRNA"/>
</dbReference>
<dbReference type="EMBL" id="AE014297">
    <property type="protein sequence ID" value="AAN14363.1"/>
    <property type="molecule type" value="Genomic_DNA"/>
</dbReference>
<dbReference type="EMBL" id="AY051671">
    <property type="protein sequence ID" value="AAK93095.1"/>
    <property type="molecule type" value="mRNA"/>
</dbReference>
<dbReference type="PIR" id="E46036">
    <property type="entry name" value="E46036"/>
</dbReference>
<dbReference type="RefSeq" id="NP_001163666.1">
    <property type="nucleotide sequence ID" value="NM_001170195.3"/>
</dbReference>
<dbReference type="RefSeq" id="NP_524420.1">
    <property type="nucleotide sequence ID" value="NM_079696.6"/>
</dbReference>
<dbReference type="RefSeq" id="NP_732544.1">
    <property type="nucleotide sequence ID" value="NM_169916.3"/>
</dbReference>
<dbReference type="SMR" id="P23573"/>
<dbReference type="BioGRID" id="67428">
    <property type="interactions" value="53"/>
</dbReference>
<dbReference type="DIP" id="DIP-648N"/>
<dbReference type="FunCoup" id="P23573">
    <property type="interactions" value="652"/>
</dbReference>
<dbReference type="IntAct" id="P23573">
    <property type="interactions" value="75"/>
</dbReference>
<dbReference type="MINT" id="P23573"/>
<dbReference type="STRING" id="7227.FBpp0289675"/>
<dbReference type="iPTMnet" id="P23573"/>
<dbReference type="PaxDb" id="7227-FBpp0289675"/>
<dbReference type="EnsemblMetazoa" id="FBtr0083921">
    <property type="protein sequence ID" value="FBpp0083329"/>
    <property type="gene ID" value="FBgn0004107"/>
</dbReference>
<dbReference type="EnsemblMetazoa" id="FBtr0083922">
    <property type="protein sequence ID" value="FBpp0083330"/>
    <property type="gene ID" value="FBgn0004107"/>
</dbReference>
<dbReference type="EnsemblMetazoa" id="FBtr0300447">
    <property type="protein sequence ID" value="FBpp0289675"/>
    <property type="gene ID" value="FBgn0004107"/>
</dbReference>
<dbReference type="GeneID" id="42453"/>
<dbReference type="KEGG" id="dme:Dmel_CG10498"/>
<dbReference type="AGR" id="FB:FBgn0004107"/>
<dbReference type="CTD" id="1017"/>
<dbReference type="FlyBase" id="FBgn0004107">
    <property type="gene designation" value="Cdk2"/>
</dbReference>
<dbReference type="VEuPathDB" id="VectorBase:FBgn0004107"/>
<dbReference type="eggNOG" id="KOG0594">
    <property type="taxonomic scope" value="Eukaryota"/>
</dbReference>
<dbReference type="GeneTree" id="ENSGT00940000153335"/>
<dbReference type="HOGENOM" id="CLU_000288_181_1_1"/>
<dbReference type="InParanoid" id="P23573"/>
<dbReference type="OMA" id="PDETKWP"/>
<dbReference type="OrthoDB" id="1732493at2759"/>
<dbReference type="PhylomeDB" id="P23573"/>
<dbReference type="BRENDA" id="2.7.11.22">
    <property type="organism ID" value="1994"/>
</dbReference>
<dbReference type="Reactome" id="R-DME-1538133">
    <property type="pathway name" value="G0 and Early G1"/>
</dbReference>
<dbReference type="Reactome" id="R-DME-176187">
    <property type="pathway name" value="Activation of ATR in response to replication stress"/>
</dbReference>
<dbReference type="Reactome" id="R-DME-176408">
    <property type="pathway name" value="Regulation of APC/C activators between G1/S and early anaphase"/>
</dbReference>
<dbReference type="Reactome" id="R-DME-187577">
    <property type="pathway name" value="SCF(Skp2)-mediated degradation of p27/p21"/>
</dbReference>
<dbReference type="Reactome" id="R-DME-2559582">
    <property type="pathway name" value="Senescence-Associated Secretory Phenotype (SASP)"/>
</dbReference>
<dbReference type="Reactome" id="R-DME-2559586">
    <property type="pathway name" value="DNA Damage/Telomere Stress Induced Senescence"/>
</dbReference>
<dbReference type="Reactome" id="R-DME-5693607">
    <property type="pathway name" value="Processing of DNA double-strand break ends"/>
</dbReference>
<dbReference type="Reactome" id="R-DME-6804116">
    <property type="pathway name" value="TP53 Regulates Transcription of Genes Involved in G1 Cell Cycle Arrest"/>
</dbReference>
<dbReference type="Reactome" id="R-DME-6804756">
    <property type="pathway name" value="Regulation of TP53 Activity through Phosphorylation"/>
</dbReference>
<dbReference type="Reactome" id="R-DME-68911">
    <property type="pathway name" value="G2 Phase"/>
</dbReference>
<dbReference type="Reactome" id="R-DME-68949">
    <property type="pathway name" value="Orc1 removal from chromatin"/>
</dbReference>
<dbReference type="Reactome" id="R-DME-68962">
    <property type="pathway name" value="Activation of the pre-replicative complex"/>
</dbReference>
<dbReference type="Reactome" id="R-DME-69017">
    <property type="pathway name" value="CDK-mediated phosphorylation and removal of Cdc6"/>
</dbReference>
<dbReference type="Reactome" id="R-DME-69202">
    <property type="pathway name" value="Cyclin E associated events during G1/S transition"/>
</dbReference>
<dbReference type="Reactome" id="R-DME-69563">
    <property type="pathway name" value="p53-Dependent G1 DNA Damage Response"/>
</dbReference>
<dbReference type="Reactome" id="R-DME-69656">
    <property type="pathway name" value="Cyclin A:Cdk2-associated events at S phase entry"/>
</dbReference>
<dbReference type="Reactome" id="R-DME-9616222">
    <property type="pathway name" value="Transcriptional regulation of granulopoiesis"/>
</dbReference>
<dbReference type="SignaLink" id="P23573"/>
<dbReference type="BioGRID-ORCS" id="42453">
    <property type="hits" value="1 hit in 3 CRISPR screens"/>
</dbReference>
<dbReference type="GenomeRNAi" id="42453"/>
<dbReference type="PRO" id="PR:P23573"/>
<dbReference type="Proteomes" id="UP000000803">
    <property type="component" value="Chromosome 3R"/>
</dbReference>
<dbReference type="Bgee" id="FBgn0004107">
    <property type="expression patterns" value="Expressed in ovary and 58 other cell types or tissues"/>
</dbReference>
<dbReference type="ExpressionAtlas" id="P23573">
    <property type="expression patterns" value="baseline and differential"/>
</dbReference>
<dbReference type="GO" id="GO:0000307">
    <property type="term" value="C:cyclin-dependent protein kinase holoenzyme complex"/>
    <property type="evidence" value="ECO:0000318"/>
    <property type="project" value="GO_Central"/>
</dbReference>
<dbReference type="GO" id="GO:0005737">
    <property type="term" value="C:cytoplasm"/>
    <property type="evidence" value="ECO:0000318"/>
    <property type="project" value="GO_Central"/>
</dbReference>
<dbReference type="GO" id="GO:0005634">
    <property type="term" value="C:nucleus"/>
    <property type="evidence" value="ECO:0000318"/>
    <property type="project" value="GO_Central"/>
</dbReference>
<dbReference type="GO" id="GO:0005524">
    <property type="term" value="F:ATP binding"/>
    <property type="evidence" value="ECO:0007669"/>
    <property type="project" value="UniProtKB-KW"/>
</dbReference>
<dbReference type="GO" id="GO:0030332">
    <property type="term" value="F:cyclin binding"/>
    <property type="evidence" value="ECO:0000318"/>
    <property type="project" value="GO_Central"/>
</dbReference>
<dbReference type="GO" id="GO:0004693">
    <property type="term" value="F:cyclin-dependent protein serine/threonine kinase activity"/>
    <property type="evidence" value="ECO:0000250"/>
    <property type="project" value="FlyBase"/>
</dbReference>
<dbReference type="GO" id="GO:0106310">
    <property type="term" value="F:protein serine kinase activity"/>
    <property type="evidence" value="ECO:0007669"/>
    <property type="project" value="RHEA"/>
</dbReference>
<dbReference type="GO" id="GO:0008353">
    <property type="term" value="F:RNA polymerase II CTD heptapeptide repeat kinase activity"/>
    <property type="evidence" value="ECO:0007669"/>
    <property type="project" value="UniProtKB-EC"/>
</dbReference>
<dbReference type="GO" id="GO:0051301">
    <property type="term" value="P:cell division"/>
    <property type="evidence" value="ECO:0007669"/>
    <property type="project" value="UniProtKB-KW"/>
</dbReference>
<dbReference type="GO" id="GO:0000082">
    <property type="term" value="P:G1/S transition of mitotic cell cycle"/>
    <property type="evidence" value="ECO:0000250"/>
    <property type="project" value="FlyBase"/>
</dbReference>
<dbReference type="GO" id="GO:0000086">
    <property type="term" value="P:G2/M transition of mitotic cell cycle"/>
    <property type="evidence" value="ECO:0000250"/>
    <property type="project" value="FlyBase"/>
</dbReference>
<dbReference type="GO" id="GO:0046427">
    <property type="term" value="P:positive regulation of receptor signaling pathway via JAK-STAT"/>
    <property type="evidence" value="ECO:0000353"/>
    <property type="project" value="FlyBase"/>
</dbReference>
<dbReference type="GO" id="GO:0010389">
    <property type="term" value="P:regulation of G2/M transition of mitotic cell cycle"/>
    <property type="evidence" value="ECO:0000318"/>
    <property type="project" value="GO_Central"/>
</dbReference>
<dbReference type="GO" id="GO:0010468">
    <property type="term" value="P:regulation of gene expression"/>
    <property type="evidence" value="ECO:0000318"/>
    <property type="project" value="GO_Central"/>
</dbReference>
<dbReference type="GO" id="GO:0007165">
    <property type="term" value="P:signal transduction"/>
    <property type="evidence" value="ECO:0000318"/>
    <property type="project" value="GO_Central"/>
</dbReference>
<dbReference type="CDD" id="cd07835">
    <property type="entry name" value="STKc_CDK1_CdkB_like"/>
    <property type="match status" value="1"/>
</dbReference>
<dbReference type="FunFam" id="3.30.200.20:FF:000375">
    <property type="entry name" value="Cell division related protein kinase 2"/>
    <property type="match status" value="1"/>
</dbReference>
<dbReference type="FunFam" id="1.10.510.10:FF:000184">
    <property type="entry name" value="cyclin-dependent kinase 5 homolog"/>
    <property type="match status" value="1"/>
</dbReference>
<dbReference type="Gene3D" id="3.30.200.20">
    <property type="entry name" value="Phosphorylase Kinase, domain 1"/>
    <property type="match status" value="1"/>
</dbReference>
<dbReference type="Gene3D" id="1.10.510.10">
    <property type="entry name" value="Transferase(Phosphotransferase) domain 1"/>
    <property type="match status" value="1"/>
</dbReference>
<dbReference type="InterPro" id="IPR050108">
    <property type="entry name" value="CDK"/>
</dbReference>
<dbReference type="InterPro" id="IPR011009">
    <property type="entry name" value="Kinase-like_dom_sf"/>
</dbReference>
<dbReference type="InterPro" id="IPR000719">
    <property type="entry name" value="Prot_kinase_dom"/>
</dbReference>
<dbReference type="InterPro" id="IPR017441">
    <property type="entry name" value="Protein_kinase_ATP_BS"/>
</dbReference>
<dbReference type="InterPro" id="IPR008271">
    <property type="entry name" value="Ser/Thr_kinase_AS"/>
</dbReference>
<dbReference type="PANTHER" id="PTHR24056">
    <property type="entry name" value="CELL DIVISION PROTEIN KINASE"/>
    <property type="match status" value="1"/>
</dbReference>
<dbReference type="PANTHER" id="PTHR24056:SF254">
    <property type="entry name" value="CYCLIN-DEPENDENT KINASE 2"/>
    <property type="match status" value="1"/>
</dbReference>
<dbReference type="Pfam" id="PF00069">
    <property type="entry name" value="Pkinase"/>
    <property type="match status" value="1"/>
</dbReference>
<dbReference type="SMART" id="SM00220">
    <property type="entry name" value="S_TKc"/>
    <property type="match status" value="1"/>
</dbReference>
<dbReference type="SUPFAM" id="SSF56112">
    <property type="entry name" value="Protein kinase-like (PK-like)"/>
    <property type="match status" value="1"/>
</dbReference>
<dbReference type="PROSITE" id="PS00107">
    <property type="entry name" value="PROTEIN_KINASE_ATP"/>
    <property type="match status" value="1"/>
</dbReference>
<dbReference type="PROSITE" id="PS50011">
    <property type="entry name" value="PROTEIN_KINASE_DOM"/>
    <property type="match status" value="1"/>
</dbReference>
<dbReference type="PROSITE" id="PS00108">
    <property type="entry name" value="PROTEIN_KINASE_ST"/>
    <property type="match status" value="1"/>
</dbReference>
<reference key="1">
    <citation type="journal article" date="1990" name="EMBO J.">
        <title>Drosophila cdc2 homologs: a functional homolog is coexpressed with a cognate variant.</title>
        <authorList>
            <person name="Lehner C.F."/>
            <person name="O'Farrell P.H."/>
        </authorList>
    </citation>
    <scope>NUCLEOTIDE SEQUENCE [MRNA]</scope>
    <source>
        <strain>Oregon-R</strain>
        <tissue>Embryo</tissue>
    </source>
</reference>
<reference key="2">
    <citation type="journal article" date="2000" name="Science">
        <title>The genome sequence of Drosophila melanogaster.</title>
        <authorList>
            <person name="Adams M.D."/>
            <person name="Celniker S.E."/>
            <person name="Holt R.A."/>
            <person name="Evans C.A."/>
            <person name="Gocayne J.D."/>
            <person name="Amanatides P.G."/>
            <person name="Scherer S.E."/>
            <person name="Li P.W."/>
            <person name="Hoskins R.A."/>
            <person name="Galle R.F."/>
            <person name="George R.A."/>
            <person name="Lewis S.E."/>
            <person name="Richards S."/>
            <person name="Ashburner M."/>
            <person name="Henderson S.N."/>
            <person name="Sutton G.G."/>
            <person name="Wortman J.R."/>
            <person name="Yandell M.D."/>
            <person name="Zhang Q."/>
            <person name="Chen L.X."/>
            <person name="Brandon R.C."/>
            <person name="Rogers Y.-H.C."/>
            <person name="Blazej R.G."/>
            <person name="Champe M."/>
            <person name="Pfeiffer B.D."/>
            <person name="Wan K.H."/>
            <person name="Doyle C."/>
            <person name="Baxter E.G."/>
            <person name="Helt G."/>
            <person name="Nelson C.R."/>
            <person name="Miklos G.L.G."/>
            <person name="Abril J.F."/>
            <person name="Agbayani A."/>
            <person name="An H.-J."/>
            <person name="Andrews-Pfannkoch C."/>
            <person name="Baldwin D."/>
            <person name="Ballew R.M."/>
            <person name="Basu A."/>
            <person name="Baxendale J."/>
            <person name="Bayraktaroglu L."/>
            <person name="Beasley E.M."/>
            <person name="Beeson K.Y."/>
            <person name="Benos P.V."/>
            <person name="Berman B.P."/>
            <person name="Bhandari D."/>
            <person name="Bolshakov S."/>
            <person name="Borkova D."/>
            <person name="Botchan M.R."/>
            <person name="Bouck J."/>
            <person name="Brokstein P."/>
            <person name="Brottier P."/>
            <person name="Burtis K.C."/>
            <person name="Busam D.A."/>
            <person name="Butler H."/>
            <person name="Cadieu E."/>
            <person name="Center A."/>
            <person name="Chandra I."/>
            <person name="Cherry J.M."/>
            <person name="Cawley S."/>
            <person name="Dahlke C."/>
            <person name="Davenport L.B."/>
            <person name="Davies P."/>
            <person name="de Pablos B."/>
            <person name="Delcher A."/>
            <person name="Deng Z."/>
            <person name="Mays A.D."/>
            <person name="Dew I."/>
            <person name="Dietz S.M."/>
            <person name="Dodson K."/>
            <person name="Doup L.E."/>
            <person name="Downes M."/>
            <person name="Dugan-Rocha S."/>
            <person name="Dunkov B.C."/>
            <person name="Dunn P."/>
            <person name="Durbin K.J."/>
            <person name="Evangelista C.C."/>
            <person name="Ferraz C."/>
            <person name="Ferriera S."/>
            <person name="Fleischmann W."/>
            <person name="Fosler C."/>
            <person name="Gabrielian A.E."/>
            <person name="Garg N.S."/>
            <person name="Gelbart W.M."/>
            <person name="Glasser K."/>
            <person name="Glodek A."/>
            <person name="Gong F."/>
            <person name="Gorrell J.H."/>
            <person name="Gu Z."/>
            <person name="Guan P."/>
            <person name="Harris M."/>
            <person name="Harris N.L."/>
            <person name="Harvey D.A."/>
            <person name="Heiman T.J."/>
            <person name="Hernandez J.R."/>
            <person name="Houck J."/>
            <person name="Hostin D."/>
            <person name="Houston K.A."/>
            <person name="Howland T.J."/>
            <person name="Wei M.-H."/>
            <person name="Ibegwam C."/>
            <person name="Jalali M."/>
            <person name="Kalush F."/>
            <person name="Karpen G.H."/>
            <person name="Ke Z."/>
            <person name="Kennison J.A."/>
            <person name="Ketchum K.A."/>
            <person name="Kimmel B.E."/>
            <person name="Kodira C.D."/>
            <person name="Kraft C.L."/>
            <person name="Kravitz S."/>
            <person name="Kulp D."/>
            <person name="Lai Z."/>
            <person name="Lasko P."/>
            <person name="Lei Y."/>
            <person name="Levitsky A.A."/>
            <person name="Li J.H."/>
            <person name="Li Z."/>
            <person name="Liang Y."/>
            <person name="Lin X."/>
            <person name="Liu X."/>
            <person name="Mattei B."/>
            <person name="McIntosh T.C."/>
            <person name="McLeod M.P."/>
            <person name="McPherson D."/>
            <person name="Merkulov G."/>
            <person name="Milshina N.V."/>
            <person name="Mobarry C."/>
            <person name="Morris J."/>
            <person name="Moshrefi A."/>
            <person name="Mount S.M."/>
            <person name="Moy M."/>
            <person name="Murphy B."/>
            <person name="Murphy L."/>
            <person name="Muzny D.M."/>
            <person name="Nelson D.L."/>
            <person name="Nelson D.R."/>
            <person name="Nelson K.A."/>
            <person name="Nixon K."/>
            <person name="Nusskern D.R."/>
            <person name="Pacleb J.M."/>
            <person name="Palazzolo M."/>
            <person name="Pittman G.S."/>
            <person name="Pan S."/>
            <person name="Pollard J."/>
            <person name="Puri V."/>
            <person name="Reese M.G."/>
            <person name="Reinert K."/>
            <person name="Remington K."/>
            <person name="Saunders R.D.C."/>
            <person name="Scheeler F."/>
            <person name="Shen H."/>
            <person name="Shue B.C."/>
            <person name="Siden-Kiamos I."/>
            <person name="Simpson M."/>
            <person name="Skupski M.P."/>
            <person name="Smith T.J."/>
            <person name="Spier E."/>
            <person name="Spradling A.C."/>
            <person name="Stapleton M."/>
            <person name="Strong R."/>
            <person name="Sun E."/>
            <person name="Svirskas R."/>
            <person name="Tector C."/>
            <person name="Turner R."/>
            <person name="Venter E."/>
            <person name="Wang A.H."/>
            <person name="Wang X."/>
            <person name="Wang Z.-Y."/>
            <person name="Wassarman D.A."/>
            <person name="Weinstock G.M."/>
            <person name="Weissenbach J."/>
            <person name="Williams S.M."/>
            <person name="Woodage T."/>
            <person name="Worley K.C."/>
            <person name="Wu D."/>
            <person name="Yang S."/>
            <person name="Yao Q.A."/>
            <person name="Ye J."/>
            <person name="Yeh R.-F."/>
            <person name="Zaveri J.S."/>
            <person name="Zhan M."/>
            <person name="Zhang G."/>
            <person name="Zhao Q."/>
            <person name="Zheng L."/>
            <person name="Zheng X.H."/>
            <person name="Zhong F.N."/>
            <person name="Zhong W."/>
            <person name="Zhou X."/>
            <person name="Zhu S.C."/>
            <person name="Zhu X."/>
            <person name="Smith H.O."/>
            <person name="Gibbs R.A."/>
            <person name="Myers E.W."/>
            <person name="Rubin G.M."/>
            <person name="Venter J.C."/>
        </authorList>
    </citation>
    <scope>NUCLEOTIDE SEQUENCE [LARGE SCALE GENOMIC DNA]</scope>
    <source>
        <strain>Berkeley</strain>
    </source>
</reference>
<reference key="3">
    <citation type="journal article" date="2002" name="Genome Biol.">
        <title>Annotation of the Drosophila melanogaster euchromatic genome: a systematic review.</title>
        <authorList>
            <person name="Misra S."/>
            <person name="Crosby M.A."/>
            <person name="Mungall C.J."/>
            <person name="Matthews B.B."/>
            <person name="Campbell K.S."/>
            <person name="Hradecky P."/>
            <person name="Huang Y."/>
            <person name="Kaminker J.S."/>
            <person name="Millburn G.H."/>
            <person name="Prochnik S.E."/>
            <person name="Smith C.D."/>
            <person name="Tupy J.L."/>
            <person name="Whitfield E.J."/>
            <person name="Bayraktaroglu L."/>
            <person name="Berman B.P."/>
            <person name="Bettencourt B.R."/>
            <person name="Celniker S.E."/>
            <person name="de Grey A.D.N.J."/>
            <person name="Drysdale R.A."/>
            <person name="Harris N.L."/>
            <person name="Richter J."/>
            <person name="Russo S."/>
            <person name="Schroeder A.J."/>
            <person name="Shu S.Q."/>
            <person name="Stapleton M."/>
            <person name="Yamada C."/>
            <person name="Ashburner M."/>
            <person name="Gelbart W.M."/>
            <person name="Rubin G.M."/>
            <person name="Lewis S.E."/>
        </authorList>
    </citation>
    <scope>GENOME REANNOTATION</scope>
    <source>
        <strain>Berkeley</strain>
    </source>
</reference>
<reference key="4">
    <citation type="journal article" date="2002" name="Genome Biol.">
        <title>A Drosophila full-length cDNA resource.</title>
        <authorList>
            <person name="Stapleton M."/>
            <person name="Carlson J.W."/>
            <person name="Brokstein P."/>
            <person name="Yu C."/>
            <person name="Champe M."/>
            <person name="George R.A."/>
            <person name="Guarin H."/>
            <person name="Kronmiller B."/>
            <person name="Pacleb J.M."/>
            <person name="Park S."/>
            <person name="Wan K.H."/>
            <person name="Rubin G.M."/>
            <person name="Celniker S.E."/>
        </authorList>
    </citation>
    <scope>NUCLEOTIDE SEQUENCE [LARGE SCALE MRNA]</scope>
    <source>
        <strain>Berkeley</strain>
        <tissue>Embryo</tissue>
    </source>
</reference>
<reference key="5">
    <citation type="journal article" date="1992" name="Proc. Natl. Acad. Sci. U.S.A.">
        <title>Primary structure, expression, and signal-dependent tyrosine phosphorylation of a Drosophila homolog of extracellular signal-regulated kinase.</title>
        <authorList>
            <person name="Biggs W.H. III"/>
            <person name="Zipursky S.L."/>
        </authorList>
    </citation>
    <scope>NUCLEOTIDE SEQUENCE OF 21-167</scope>
    <source>
        <tissue>Imaginal disk</tissue>
    </source>
</reference>
<reference key="6">
    <citation type="journal article" date="2008" name="J. Proteome Res.">
        <title>Phosphoproteome analysis of Drosophila melanogaster embryos.</title>
        <authorList>
            <person name="Zhai B."/>
            <person name="Villen J."/>
            <person name="Beausoleil S.A."/>
            <person name="Mintseris J."/>
            <person name="Gygi S.P."/>
        </authorList>
    </citation>
    <scope>PHOSPHORYLATION [LARGE SCALE ANALYSIS] AT TYR-162 AND THR-163</scope>
    <scope>IDENTIFICATION BY MASS SPECTROMETRY</scope>
    <source>
        <tissue>Embryo</tissue>
    </source>
</reference>
<reference key="7">
    <citation type="journal article" date="2011" name="Cell Cycle">
        <title>Drosophila melanogaster Cyclin G coordinates cell growth and cell proliferation.</title>
        <authorList>
            <person name="Faradji F."/>
            <person name="Bloyer S."/>
            <person name="Dardalhon-Cumenal D."/>
            <person name="Randsholt N.B."/>
            <person name="Peronnet F."/>
        </authorList>
    </citation>
    <scope>INTERACTION WITH CYCG</scope>
</reference>
<sequence>MTTILDNFQRAEKIGEGTYGIVYKARSNSTGQDVALKKIRLEGETEGVPSTAIREISLLKNLKHPNVVQLFDVVISGNNLYMIFEYLNMDLKKLMDKKKDVFTPQLIKSYMHQILDAVGFCHTNRILHRDLKPQNLLVDTAGKIKLADFGLARAFNVPMRAYTHEVVTLWYRAPEILLGTKFYSTGVDIWSLGCIFSEMIMRRSLFPGDSEIDQLYRIFRTLSTPDETNWPGVTQLPDFKTKFPRWEGTNMPQPITEHEAHELIMSMLCYDPNLRISAKDALQHAYFRNVQHVDHVALPVDPNAGSASRLTRLV</sequence>
<organism>
    <name type="scientific">Drosophila melanogaster</name>
    <name type="common">Fruit fly</name>
    <dbReference type="NCBI Taxonomy" id="7227"/>
    <lineage>
        <taxon>Eukaryota</taxon>
        <taxon>Metazoa</taxon>
        <taxon>Ecdysozoa</taxon>
        <taxon>Arthropoda</taxon>
        <taxon>Hexapoda</taxon>
        <taxon>Insecta</taxon>
        <taxon>Pterygota</taxon>
        <taxon>Neoptera</taxon>
        <taxon>Endopterygota</taxon>
        <taxon>Diptera</taxon>
        <taxon>Brachycera</taxon>
        <taxon>Muscomorpha</taxon>
        <taxon>Ephydroidea</taxon>
        <taxon>Drosophilidae</taxon>
        <taxon>Drosophila</taxon>
        <taxon>Sophophora</taxon>
    </lineage>
</organism>
<feature type="chain" id="PRO_0000085744" description="Cyclin-dependent kinase 2">
    <location>
        <begin position="1"/>
        <end position="314"/>
    </location>
</feature>
<feature type="domain" description="Protein kinase" evidence="2">
    <location>
        <begin position="8"/>
        <end position="287"/>
    </location>
</feature>
<feature type="active site" description="Proton acceptor" evidence="2 3">
    <location>
        <position position="130"/>
    </location>
</feature>
<feature type="binding site" evidence="2">
    <location>
        <begin position="14"/>
        <end position="22"/>
    </location>
    <ligand>
        <name>ATP</name>
        <dbReference type="ChEBI" id="CHEBI:30616"/>
    </ligand>
</feature>
<feature type="binding site" evidence="2">
    <location>
        <position position="37"/>
    </location>
    <ligand>
        <name>ATP</name>
        <dbReference type="ChEBI" id="CHEBI:30616"/>
    </ligand>
</feature>
<feature type="modified residue" description="Phosphothreonine" evidence="1">
    <location>
        <position position="18"/>
    </location>
</feature>
<feature type="modified residue" description="Phosphotyrosine" evidence="1">
    <location>
        <position position="19"/>
    </location>
</feature>
<feature type="modified residue" description="Phosphotyrosine" evidence="4">
    <location>
        <position position="162"/>
    </location>
</feature>
<feature type="modified residue" description="Phosphothreonine" evidence="4">
    <location>
        <position position="163"/>
    </location>
</feature>
<feature type="sequence conflict" description="In Ref. 5." evidence="6" ref="5">
    <original>S</original>
    <variation>T</variation>
    <location>
        <position position="27"/>
    </location>
</feature>
<feature type="sequence conflict" description="In Ref. 5." evidence="6" ref="5">
    <original>G</original>
    <variation>A</variation>
    <location>
        <position position="119"/>
    </location>
</feature>
<accession>P23573</accession>
<accession>Q0KI40</accession>
<accession>Q9TXB2</accession>
<accession>Q9VDJ4</accession>
<protein>
    <recommendedName>
        <fullName evidence="7">Cyclin-dependent kinase 2</fullName>
        <ecNumber>2.7.11.22</ecNumber>
        <ecNumber>2.7.11.23</ecNumber>
    </recommendedName>
    <alternativeName>
        <fullName>Cell division control protein 2 cognate</fullName>
    </alternativeName>
</protein>
<comment type="function">
    <text>Like Cdk1, could play a key role in the control of the eukaryotic cell cycle.</text>
</comment>
<comment type="catalytic activity">
    <reaction>
        <text>L-seryl-[protein] + ATP = O-phospho-L-seryl-[protein] + ADP + H(+)</text>
        <dbReference type="Rhea" id="RHEA:17989"/>
        <dbReference type="Rhea" id="RHEA-COMP:9863"/>
        <dbReference type="Rhea" id="RHEA-COMP:11604"/>
        <dbReference type="ChEBI" id="CHEBI:15378"/>
        <dbReference type="ChEBI" id="CHEBI:29999"/>
        <dbReference type="ChEBI" id="CHEBI:30616"/>
        <dbReference type="ChEBI" id="CHEBI:83421"/>
        <dbReference type="ChEBI" id="CHEBI:456216"/>
        <dbReference type="EC" id="2.7.11.22"/>
    </reaction>
</comment>
<comment type="catalytic activity">
    <reaction>
        <text>L-threonyl-[protein] + ATP = O-phospho-L-threonyl-[protein] + ADP + H(+)</text>
        <dbReference type="Rhea" id="RHEA:46608"/>
        <dbReference type="Rhea" id="RHEA-COMP:11060"/>
        <dbReference type="Rhea" id="RHEA-COMP:11605"/>
        <dbReference type="ChEBI" id="CHEBI:15378"/>
        <dbReference type="ChEBI" id="CHEBI:30013"/>
        <dbReference type="ChEBI" id="CHEBI:30616"/>
        <dbReference type="ChEBI" id="CHEBI:61977"/>
        <dbReference type="ChEBI" id="CHEBI:456216"/>
        <dbReference type="EC" id="2.7.11.22"/>
    </reaction>
</comment>
<comment type="catalytic activity">
    <reaction>
        <text>[DNA-directed RNA polymerase] + ATP = phospho-[DNA-directed RNA polymerase] + ADP + H(+)</text>
        <dbReference type="Rhea" id="RHEA:10216"/>
        <dbReference type="Rhea" id="RHEA-COMP:11321"/>
        <dbReference type="Rhea" id="RHEA-COMP:11322"/>
        <dbReference type="ChEBI" id="CHEBI:15378"/>
        <dbReference type="ChEBI" id="CHEBI:30616"/>
        <dbReference type="ChEBI" id="CHEBI:43176"/>
        <dbReference type="ChEBI" id="CHEBI:68546"/>
        <dbReference type="ChEBI" id="CHEBI:456216"/>
        <dbReference type="EC" id="2.7.11.23"/>
    </reaction>
</comment>
<comment type="subunit">
    <text evidence="5">Interacts with cyclin CycG.</text>
</comment>
<comment type="interaction">
    <interactant intactId="EBI-95916">
        <id>P23573</id>
    </interactant>
    <interactant intactId="EBI-455799">
        <id>Q24159</id>
        <label>CycJ</label>
    </interactant>
    <organismsDiffer>false</organismsDiffer>
    <experiments>5</experiments>
</comment>
<comment type="interaction">
    <interactant intactId="EBI-95916">
        <id>P23573</id>
    </interactant>
    <interactant intactId="EBI-130995">
        <id>Q961D1</id>
        <label>CycK</label>
    </interactant>
    <organismsDiffer>false</organismsDiffer>
    <experiments>5</experiments>
</comment>
<comment type="interaction">
    <interactant intactId="EBI-95916">
        <id>P23573</id>
    </interactant>
    <interactant intactId="EBI-868936">
        <id>P91654</id>
        <label>dap</label>
    </interactant>
    <organismsDiffer>false</organismsDiffer>
    <experiments>3</experiments>
</comment>
<comment type="similarity">
    <text evidence="6">Belongs to the protein kinase superfamily. CMGC Ser/Thr protein kinase family. CDC2/CDKX subfamily.</text>
</comment>